<sequence length="795" mass="86564">MKFSELWLREWVNPAISSDALSEQITMAGLEVDGVEPVAGAFHGVVVGEVVECAQHPNADKLRVTKVNVGGDRLLDIVCGAPNCRQGLKVAVATVGAVLPGDFKIKAAKLRGEPSEGMLCSFSELGISDDHSGIIELPADAPLGTDIREYLKLDDNTIEISVTPNRADCLGILGVARDVAVLNELALTAPATEPVTATIADRFPIQVDATEACPRYLGRVVKGINVKAATPLWMREKLRRCGIRSIDPVVDVTNYVLLELGQPMHAFDLNRLEGGIVVRMAKEGETLRLLDGTDATLSADTLVIADHQKALAMGGIFGGEHSGVNGETQDVLLECAYFNPLSITGRARRYGLHTDASHRYERGVDPALQHQAMERATRLLLDICGGEAGPVVEAVSEKDLPARATIALRRDKLDRLIGHVISDEKVSDILNRLGCQVTQTADGWQAVAPSWRFDMAIEEDLVEEVARVYGYNNIPNIPTQAPLKMTQHREADLALKRVKTLLVDHGFQEAITYSFVDPKIQSLIHPGEDALILPSPISVEMSAMRLSLWSGLLGAVVHNQNRQQSRLRLFESGLRFVPDQRADLGVRQETMLAGVITGTRYEEHWDLARQAVDFYDLKGDLEAVLALTGKLSVLEFRAESHPALHPGQTAAIYLAGERIGYIGVIHPELERKLDLNGRTVVFEVLWDKLAERVVPEAADISRFPANRRDIAVVVAESVPAGDVLAECKKVGANQLVGVNLFDVYRGKGVAEGYKSLAISLVLQDTARTLAEEEIAATVAQCVAALKQRFQASLRD</sequence>
<protein>
    <recommendedName>
        <fullName>Phenylalanine--tRNA ligase beta subunit</fullName>
        <ecNumber>6.1.1.20</ecNumber>
    </recommendedName>
    <alternativeName>
        <fullName>Phenylalanyl-tRNA synthetase beta subunit</fullName>
        <shortName>PheRS</shortName>
    </alternativeName>
</protein>
<comment type="catalytic activity">
    <reaction>
        <text>tRNA(Phe) + L-phenylalanine + ATP = L-phenylalanyl-tRNA(Phe) + AMP + diphosphate + H(+)</text>
        <dbReference type="Rhea" id="RHEA:19413"/>
        <dbReference type="Rhea" id="RHEA-COMP:9668"/>
        <dbReference type="Rhea" id="RHEA-COMP:9699"/>
        <dbReference type="ChEBI" id="CHEBI:15378"/>
        <dbReference type="ChEBI" id="CHEBI:30616"/>
        <dbReference type="ChEBI" id="CHEBI:33019"/>
        <dbReference type="ChEBI" id="CHEBI:58095"/>
        <dbReference type="ChEBI" id="CHEBI:78442"/>
        <dbReference type="ChEBI" id="CHEBI:78531"/>
        <dbReference type="ChEBI" id="CHEBI:456215"/>
        <dbReference type="EC" id="6.1.1.20"/>
    </reaction>
</comment>
<comment type="cofactor">
    <cofactor evidence="1">
        <name>Mg(2+)</name>
        <dbReference type="ChEBI" id="CHEBI:18420"/>
    </cofactor>
    <text evidence="1">Binds 2 magnesium ions per tetramer.</text>
</comment>
<comment type="subunit">
    <text evidence="1">Tetramer of two alpha and two beta subunits.</text>
</comment>
<comment type="subcellular location">
    <subcellularLocation>
        <location evidence="1">Cytoplasm</location>
    </subcellularLocation>
</comment>
<comment type="similarity">
    <text evidence="2">Belongs to the phenylalanyl-tRNA synthetase beta subunit family. Type 1 subfamily.</text>
</comment>
<organism>
    <name type="scientific">Dickeya dadantii (strain 3937)</name>
    <name type="common">Erwinia chrysanthemi (strain 3937)</name>
    <dbReference type="NCBI Taxonomy" id="198628"/>
    <lineage>
        <taxon>Bacteria</taxon>
        <taxon>Pseudomonadati</taxon>
        <taxon>Pseudomonadota</taxon>
        <taxon>Gammaproteobacteria</taxon>
        <taxon>Enterobacterales</taxon>
        <taxon>Pectobacteriaceae</taxon>
        <taxon>Dickeya</taxon>
    </lineage>
</organism>
<accession>P37984</accession>
<accession>E0SDD9</accession>
<keyword id="KW-0030">Aminoacyl-tRNA synthetase</keyword>
<keyword id="KW-0067">ATP-binding</keyword>
<keyword id="KW-0963">Cytoplasm</keyword>
<keyword id="KW-0436">Ligase</keyword>
<keyword id="KW-0460">Magnesium</keyword>
<keyword id="KW-0479">Metal-binding</keyword>
<keyword id="KW-0547">Nucleotide-binding</keyword>
<keyword id="KW-0648">Protein biosynthesis</keyword>
<keyword id="KW-1185">Reference proteome</keyword>
<keyword id="KW-0694">RNA-binding</keyword>
<keyword id="KW-0820">tRNA-binding</keyword>
<reference key="1">
    <citation type="journal article" date="2011" name="J. Bacteriol.">
        <title>Genome sequence of the plant-pathogenic bacterium Dickeya dadantii 3937.</title>
        <authorList>
            <person name="Glasner J.D."/>
            <person name="Yang C.H."/>
            <person name="Reverchon S."/>
            <person name="Hugouvieux-Cotte-Pattat N."/>
            <person name="Condemine G."/>
            <person name="Bohin J.P."/>
            <person name="Van Gijsegem F."/>
            <person name="Yang S."/>
            <person name="Franza T."/>
            <person name="Expert D."/>
            <person name="Plunkett G. III"/>
            <person name="San Francisco M.J."/>
            <person name="Charkowski A.O."/>
            <person name="Py B."/>
            <person name="Bell K."/>
            <person name="Rauscher L."/>
            <person name="Rodriguez-Palenzuela P."/>
            <person name="Toussaint A."/>
            <person name="Holeva M.C."/>
            <person name="He S.Y."/>
            <person name="Douet V."/>
            <person name="Boccara M."/>
            <person name="Blanco C."/>
            <person name="Toth I."/>
            <person name="Anderson B.D."/>
            <person name="Biehl B.S."/>
            <person name="Mau B."/>
            <person name="Flynn S.M."/>
            <person name="Barras F."/>
            <person name="Lindeberg M."/>
            <person name="Birch P.R."/>
            <person name="Tsuyumu S."/>
            <person name="Shi X."/>
            <person name="Hibbing M."/>
            <person name="Yap M.N."/>
            <person name="Carpentier M."/>
            <person name="Dassa E."/>
            <person name="Umehara M."/>
            <person name="Kim J.F."/>
            <person name="Rusch M."/>
            <person name="Soni P."/>
            <person name="Mayhew G.F."/>
            <person name="Fouts D.E."/>
            <person name="Gill S.R."/>
            <person name="Blattner F.R."/>
            <person name="Keen N.T."/>
            <person name="Perna N.T."/>
        </authorList>
    </citation>
    <scope>NUCLEOTIDE SEQUENCE [LARGE SCALE GENOMIC DNA]</scope>
    <source>
        <strain>3937</strain>
    </source>
</reference>
<reference key="2">
    <citation type="submission" date="1993-08" db="EMBL/GenBank/DDBJ databases">
        <authorList>
            <person name="Douillie A."/>
            <person name="Toussaint A."/>
            <person name="Faelen M."/>
        </authorList>
    </citation>
    <scope>NUCLEOTIDE SEQUENCE [GENOMIC DNA] OF 603-795</scope>
    <source>
        <strain>3937</strain>
    </source>
</reference>
<dbReference type="EC" id="6.1.1.20"/>
<dbReference type="EMBL" id="CP002038">
    <property type="protein sequence ID" value="ADM98631.1"/>
    <property type="molecule type" value="Genomic_DNA"/>
</dbReference>
<dbReference type="EMBL" id="X74749">
    <property type="protein sequence ID" value="CAA52767.1"/>
    <property type="molecule type" value="Genomic_DNA"/>
</dbReference>
<dbReference type="PIR" id="S37139">
    <property type="entry name" value="S37139"/>
</dbReference>
<dbReference type="RefSeq" id="WP_013318079.1">
    <property type="nucleotide sequence ID" value="NC_014500.1"/>
</dbReference>
<dbReference type="SMR" id="P37984"/>
<dbReference type="STRING" id="198628.Dda3937_03678"/>
<dbReference type="KEGG" id="ddd:Dda3937_03678"/>
<dbReference type="PATRIC" id="fig|198628.6.peg.2409"/>
<dbReference type="eggNOG" id="COG0072">
    <property type="taxonomic scope" value="Bacteria"/>
</dbReference>
<dbReference type="eggNOG" id="COG0073">
    <property type="taxonomic scope" value="Bacteria"/>
</dbReference>
<dbReference type="HOGENOM" id="CLU_016891_0_0_6"/>
<dbReference type="OrthoDB" id="9805455at2"/>
<dbReference type="Proteomes" id="UP000006859">
    <property type="component" value="Chromosome"/>
</dbReference>
<dbReference type="GO" id="GO:0009328">
    <property type="term" value="C:phenylalanine-tRNA ligase complex"/>
    <property type="evidence" value="ECO:0007669"/>
    <property type="project" value="TreeGrafter"/>
</dbReference>
<dbReference type="GO" id="GO:0005524">
    <property type="term" value="F:ATP binding"/>
    <property type="evidence" value="ECO:0007669"/>
    <property type="project" value="UniProtKB-UniRule"/>
</dbReference>
<dbReference type="GO" id="GO:0000287">
    <property type="term" value="F:magnesium ion binding"/>
    <property type="evidence" value="ECO:0007669"/>
    <property type="project" value="UniProtKB-UniRule"/>
</dbReference>
<dbReference type="GO" id="GO:0004826">
    <property type="term" value="F:phenylalanine-tRNA ligase activity"/>
    <property type="evidence" value="ECO:0007669"/>
    <property type="project" value="UniProtKB-UniRule"/>
</dbReference>
<dbReference type="GO" id="GO:0000049">
    <property type="term" value="F:tRNA binding"/>
    <property type="evidence" value="ECO:0007669"/>
    <property type="project" value="UniProtKB-KW"/>
</dbReference>
<dbReference type="GO" id="GO:0006432">
    <property type="term" value="P:phenylalanyl-tRNA aminoacylation"/>
    <property type="evidence" value="ECO:0007669"/>
    <property type="project" value="UniProtKB-UniRule"/>
</dbReference>
<dbReference type="CDD" id="cd00769">
    <property type="entry name" value="PheRS_beta_core"/>
    <property type="match status" value="1"/>
</dbReference>
<dbReference type="CDD" id="cd02796">
    <property type="entry name" value="tRNA_bind_bactPheRS"/>
    <property type="match status" value="1"/>
</dbReference>
<dbReference type="FunFam" id="2.40.50.140:FF:000045">
    <property type="entry name" value="Phenylalanine--tRNA ligase beta subunit"/>
    <property type="match status" value="1"/>
</dbReference>
<dbReference type="FunFam" id="3.30.56.10:FF:000002">
    <property type="entry name" value="Phenylalanine--tRNA ligase beta subunit"/>
    <property type="match status" value="1"/>
</dbReference>
<dbReference type="FunFam" id="3.30.70.380:FF:000001">
    <property type="entry name" value="Phenylalanine--tRNA ligase beta subunit"/>
    <property type="match status" value="1"/>
</dbReference>
<dbReference type="FunFam" id="3.30.930.10:FF:000022">
    <property type="entry name" value="Phenylalanine--tRNA ligase beta subunit"/>
    <property type="match status" value="1"/>
</dbReference>
<dbReference type="FunFam" id="3.50.40.10:FF:000001">
    <property type="entry name" value="Phenylalanine--tRNA ligase beta subunit"/>
    <property type="match status" value="1"/>
</dbReference>
<dbReference type="Gene3D" id="3.30.56.10">
    <property type="match status" value="2"/>
</dbReference>
<dbReference type="Gene3D" id="3.30.930.10">
    <property type="entry name" value="Bira Bifunctional Protein, Domain 2"/>
    <property type="match status" value="1"/>
</dbReference>
<dbReference type="Gene3D" id="3.30.70.380">
    <property type="entry name" value="Ferrodoxin-fold anticodon-binding domain"/>
    <property type="match status" value="1"/>
</dbReference>
<dbReference type="Gene3D" id="2.40.50.140">
    <property type="entry name" value="Nucleic acid-binding proteins"/>
    <property type="match status" value="1"/>
</dbReference>
<dbReference type="Gene3D" id="3.50.40.10">
    <property type="entry name" value="Phenylalanyl-trna Synthetase, Chain B, domain 3"/>
    <property type="match status" value="1"/>
</dbReference>
<dbReference type="HAMAP" id="MF_00283">
    <property type="entry name" value="Phe_tRNA_synth_beta1"/>
    <property type="match status" value="1"/>
</dbReference>
<dbReference type="InterPro" id="IPR045864">
    <property type="entry name" value="aa-tRNA-synth_II/BPL/LPL"/>
</dbReference>
<dbReference type="InterPro" id="IPR005146">
    <property type="entry name" value="B3/B4_tRNA-bd"/>
</dbReference>
<dbReference type="InterPro" id="IPR009061">
    <property type="entry name" value="DNA-bd_dom_put_sf"/>
</dbReference>
<dbReference type="InterPro" id="IPR005121">
    <property type="entry name" value="Fdx_antiC-bd"/>
</dbReference>
<dbReference type="InterPro" id="IPR036690">
    <property type="entry name" value="Fdx_antiC-bd_sf"/>
</dbReference>
<dbReference type="InterPro" id="IPR012340">
    <property type="entry name" value="NA-bd_OB-fold"/>
</dbReference>
<dbReference type="InterPro" id="IPR045060">
    <property type="entry name" value="Phe-tRNA-ligase_IIc_bsu"/>
</dbReference>
<dbReference type="InterPro" id="IPR004532">
    <property type="entry name" value="Phe-tRNA-ligase_IIc_bsu_bact"/>
</dbReference>
<dbReference type="InterPro" id="IPR020825">
    <property type="entry name" value="Phe-tRNA_synthase-like_B3/B4"/>
</dbReference>
<dbReference type="InterPro" id="IPR041616">
    <property type="entry name" value="PheRS_beta_core"/>
</dbReference>
<dbReference type="InterPro" id="IPR002547">
    <property type="entry name" value="tRNA-bd_dom"/>
</dbReference>
<dbReference type="InterPro" id="IPR033714">
    <property type="entry name" value="tRNA_bind_bactPheRS"/>
</dbReference>
<dbReference type="InterPro" id="IPR005147">
    <property type="entry name" value="tRNA_synthase_B5-dom"/>
</dbReference>
<dbReference type="NCBIfam" id="TIGR00472">
    <property type="entry name" value="pheT_bact"/>
    <property type="match status" value="1"/>
</dbReference>
<dbReference type="NCBIfam" id="NF045760">
    <property type="entry name" value="YtpR"/>
    <property type="match status" value="1"/>
</dbReference>
<dbReference type="PANTHER" id="PTHR10947:SF0">
    <property type="entry name" value="PHENYLALANINE--TRNA LIGASE BETA SUBUNIT"/>
    <property type="match status" value="1"/>
</dbReference>
<dbReference type="PANTHER" id="PTHR10947">
    <property type="entry name" value="PHENYLALANYL-TRNA SYNTHETASE BETA CHAIN AND LEUCINE-RICH REPEAT-CONTAINING PROTEIN 47"/>
    <property type="match status" value="1"/>
</dbReference>
<dbReference type="Pfam" id="PF03483">
    <property type="entry name" value="B3_4"/>
    <property type="match status" value="1"/>
</dbReference>
<dbReference type="Pfam" id="PF03484">
    <property type="entry name" value="B5"/>
    <property type="match status" value="1"/>
</dbReference>
<dbReference type="Pfam" id="PF03147">
    <property type="entry name" value="FDX-ACB"/>
    <property type="match status" value="1"/>
</dbReference>
<dbReference type="Pfam" id="PF01588">
    <property type="entry name" value="tRNA_bind"/>
    <property type="match status" value="1"/>
</dbReference>
<dbReference type="Pfam" id="PF17759">
    <property type="entry name" value="tRNA_synthFbeta"/>
    <property type="match status" value="1"/>
</dbReference>
<dbReference type="SMART" id="SM00873">
    <property type="entry name" value="B3_4"/>
    <property type="match status" value="1"/>
</dbReference>
<dbReference type="SMART" id="SM00874">
    <property type="entry name" value="B5"/>
    <property type="match status" value="1"/>
</dbReference>
<dbReference type="SMART" id="SM00896">
    <property type="entry name" value="FDX-ACB"/>
    <property type="match status" value="1"/>
</dbReference>
<dbReference type="SUPFAM" id="SSF54991">
    <property type="entry name" value="Anticodon-binding domain of PheRS"/>
    <property type="match status" value="1"/>
</dbReference>
<dbReference type="SUPFAM" id="SSF55681">
    <property type="entry name" value="Class II aaRS and biotin synthetases"/>
    <property type="match status" value="1"/>
</dbReference>
<dbReference type="SUPFAM" id="SSF50249">
    <property type="entry name" value="Nucleic acid-binding proteins"/>
    <property type="match status" value="1"/>
</dbReference>
<dbReference type="SUPFAM" id="SSF56037">
    <property type="entry name" value="PheT/TilS domain"/>
    <property type="match status" value="1"/>
</dbReference>
<dbReference type="SUPFAM" id="SSF46955">
    <property type="entry name" value="Putative DNA-binding domain"/>
    <property type="match status" value="1"/>
</dbReference>
<dbReference type="PROSITE" id="PS51483">
    <property type="entry name" value="B5"/>
    <property type="match status" value="1"/>
</dbReference>
<dbReference type="PROSITE" id="PS51447">
    <property type="entry name" value="FDX_ACB"/>
    <property type="match status" value="1"/>
</dbReference>
<dbReference type="PROSITE" id="PS50886">
    <property type="entry name" value="TRBD"/>
    <property type="match status" value="1"/>
</dbReference>
<name>SYFB_DICD3</name>
<gene>
    <name type="primary">pheT</name>
    <name type="ordered locus">Dda3937_03678</name>
</gene>
<feature type="chain" id="PRO_0000126884" description="Phenylalanine--tRNA ligase beta subunit">
    <location>
        <begin position="1"/>
        <end position="795"/>
    </location>
</feature>
<feature type="domain" description="tRNA-binding">
    <location>
        <begin position="39"/>
        <end position="148"/>
    </location>
</feature>
<feature type="domain" description="B5">
    <location>
        <begin position="401"/>
        <end position="476"/>
    </location>
</feature>
<feature type="domain" description="FDX-ACB">
    <location>
        <begin position="701"/>
        <end position="794"/>
    </location>
</feature>
<feature type="binding site" evidence="1">
    <location>
        <position position="454"/>
    </location>
    <ligand>
        <name>Mg(2+)</name>
        <dbReference type="ChEBI" id="CHEBI:18420"/>
        <note>shared with alpha subunit</note>
    </ligand>
</feature>
<feature type="binding site" evidence="1">
    <location>
        <position position="460"/>
    </location>
    <ligand>
        <name>Mg(2+)</name>
        <dbReference type="ChEBI" id="CHEBI:18420"/>
        <note>shared with alpha subunit</note>
    </ligand>
</feature>
<feature type="binding site" evidence="1">
    <location>
        <position position="463"/>
    </location>
    <ligand>
        <name>Mg(2+)</name>
        <dbReference type="ChEBI" id="CHEBI:18420"/>
        <note>shared with alpha subunit</note>
    </ligand>
</feature>
<feature type="binding site" evidence="1">
    <location>
        <position position="464"/>
    </location>
    <ligand>
        <name>Mg(2+)</name>
        <dbReference type="ChEBI" id="CHEBI:18420"/>
        <note>shared with alpha subunit</note>
    </ligand>
</feature>
<feature type="sequence conflict" description="In Ref. 2; CAA52767." evidence="2" ref="2">
    <original>D</original>
    <variation>A</variation>
    <location>
        <position position="674"/>
    </location>
</feature>
<feature type="sequence conflict" description="In Ref. 2; CAA52767." evidence="2" ref="2">
    <original>R</original>
    <variation>A</variation>
    <location>
        <position position="708"/>
    </location>
</feature>
<evidence type="ECO:0000250" key="1"/>
<evidence type="ECO:0000305" key="2"/>
<proteinExistence type="inferred from homology"/>